<reference key="1">
    <citation type="journal article" date="2010" name="BMC Genomics">
        <title>A genomic perspective on the potential of Actinobacillus succinogenes for industrial succinate production.</title>
        <authorList>
            <person name="McKinlay J.B."/>
            <person name="Laivenieks M."/>
            <person name="Schindler B.D."/>
            <person name="McKinlay A.A."/>
            <person name="Siddaramappa S."/>
            <person name="Challacombe J.F."/>
            <person name="Lowry S.R."/>
            <person name="Clum A."/>
            <person name="Lapidus A.L."/>
            <person name="Burkhart K.B."/>
            <person name="Harkins V."/>
            <person name="Vieille C."/>
        </authorList>
    </citation>
    <scope>NUCLEOTIDE SEQUENCE [LARGE SCALE GENOMIC DNA]</scope>
    <source>
        <strain>ATCC 55618 / DSM 22257 / CCUG 43843 / 130Z</strain>
    </source>
</reference>
<comment type="function">
    <text evidence="1">Essential cell division protein that stabilizes the FtsZ protofilaments by cross-linking them and that serves as a cytoplasmic membrane anchor for the Z ring. Also required for the recruitment to the septal ring of downstream cell division proteins.</text>
</comment>
<comment type="subunit">
    <text evidence="1">Interacts with FtsZ via their C-terminal domains.</text>
</comment>
<comment type="subcellular location">
    <subcellularLocation>
        <location evidence="1">Cell inner membrane</location>
        <topology evidence="1">Single-pass type I membrane protein</topology>
    </subcellularLocation>
    <text evidence="1">Localizes to the Z ring in an FtsZ-dependent manner.</text>
</comment>
<comment type="similarity">
    <text evidence="1">Belongs to the ZipA family.</text>
</comment>
<accession>A6VR17</accession>
<protein>
    <recommendedName>
        <fullName evidence="1">Cell division protein ZipA</fullName>
    </recommendedName>
</protein>
<gene>
    <name evidence="1" type="primary">zipA</name>
    <name type="ordered locus">Asuc_2068</name>
</gene>
<dbReference type="EMBL" id="CP000746">
    <property type="protein sequence ID" value="ABR75414.1"/>
    <property type="molecule type" value="Genomic_DNA"/>
</dbReference>
<dbReference type="RefSeq" id="WP_012073790.1">
    <property type="nucleotide sequence ID" value="NC_009655.1"/>
</dbReference>
<dbReference type="SMR" id="A6VR17"/>
<dbReference type="STRING" id="339671.Asuc_2068"/>
<dbReference type="KEGG" id="asu:Asuc_2068"/>
<dbReference type="eggNOG" id="COG3115">
    <property type="taxonomic scope" value="Bacteria"/>
</dbReference>
<dbReference type="HOGENOM" id="CLU_030174_1_0_6"/>
<dbReference type="OrthoDB" id="7054914at2"/>
<dbReference type="Proteomes" id="UP000001114">
    <property type="component" value="Chromosome"/>
</dbReference>
<dbReference type="GO" id="GO:0032153">
    <property type="term" value="C:cell division site"/>
    <property type="evidence" value="ECO:0007669"/>
    <property type="project" value="UniProtKB-UniRule"/>
</dbReference>
<dbReference type="GO" id="GO:0005886">
    <property type="term" value="C:plasma membrane"/>
    <property type="evidence" value="ECO:0007669"/>
    <property type="project" value="UniProtKB-SubCell"/>
</dbReference>
<dbReference type="GO" id="GO:0000917">
    <property type="term" value="P:division septum assembly"/>
    <property type="evidence" value="ECO:0007669"/>
    <property type="project" value="TreeGrafter"/>
</dbReference>
<dbReference type="GO" id="GO:0043093">
    <property type="term" value="P:FtsZ-dependent cytokinesis"/>
    <property type="evidence" value="ECO:0007669"/>
    <property type="project" value="UniProtKB-UniRule"/>
</dbReference>
<dbReference type="Gene3D" id="3.30.1400.10">
    <property type="entry name" value="ZipA, C-terminal FtsZ-binding domain"/>
    <property type="match status" value="1"/>
</dbReference>
<dbReference type="HAMAP" id="MF_00509">
    <property type="entry name" value="ZipA"/>
    <property type="match status" value="1"/>
</dbReference>
<dbReference type="InterPro" id="IPR011919">
    <property type="entry name" value="Cell_div_ZipA"/>
</dbReference>
<dbReference type="InterPro" id="IPR007449">
    <property type="entry name" value="ZipA_FtsZ-bd_C"/>
</dbReference>
<dbReference type="InterPro" id="IPR036765">
    <property type="entry name" value="ZipA_FtsZ-bd_C_sf"/>
</dbReference>
<dbReference type="NCBIfam" id="TIGR02205">
    <property type="entry name" value="septum_zipA"/>
    <property type="match status" value="1"/>
</dbReference>
<dbReference type="PANTHER" id="PTHR38685">
    <property type="entry name" value="CELL DIVISION PROTEIN ZIPA"/>
    <property type="match status" value="1"/>
</dbReference>
<dbReference type="PANTHER" id="PTHR38685:SF1">
    <property type="entry name" value="CELL DIVISION PROTEIN ZIPA"/>
    <property type="match status" value="1"/>
</dbReference>
<dbReference type="Pfam" id="PF04354">
    <property type="entry name" value="ZipA_C"/>
    <property type="match status" value="1"/>
</dbReference>
<dbReference type="SMART" id="SM00771">
    <property type="entry name" value="ZipA_C"/>
    <property type="match status" value="1"/>
</dbReference>
<dbReference type="SUPFAM" id="SSF64383">
    <property type="entry name" value="Cell-division protein ZipA, C-terminal domain"/>
    <property type="match status" value="1"/>
</dbReference>
<sequence>MDLNTILIILGILALIGLVAHGIWSNRREKSQYFDNENAFHRNPQSTGRPSAQASQPMTPNFAQPAKETEQIRQTYQEPQVRQMSSSPEQQTRPTAQAMPENRAEFNPNTVQPEQQPLDFNAAENIKITLPNTETRAGGAEPIRYEYHAEEERSAPLEQTFNQPVYTEDRAVPDMQVSLRQPAPESPISQPTLQQPVNDAPAYQHSQPAPAEPTDFIMLYVVAPENRQFHGPSLAQALDNLGFIFGQGNIYHRHLDLTVASPAIFSVANINQPGTFNPHGMQDFSTVGVALFMQLPVAGNPRANLKMMIQAAKNLASQLGGFVLTEQQEEFDVMAEAAYLARV</sequence>
<evidence type="ECO:0000255" key="1">
    <source>
        <dbReference type="HAMAP-Rule" id="MF_00509"/>
    </source>
</evidence>
<evidence type="ECO:0000256" key="2">
    <source>
        <dbReference type="SAM" id="MobiDB-lite"/>
    </source>
</evidence>
<keyword id="KW-0131">Cell cycle</keyword>
<keyword id="KW-0132">Cell division</keyword>
<keyword id="KW-0997">Cell inner membrane</keyword>
<keyword id="KW-1003">Cell membrane</keyword>
<keyword id="KW-0472">Membrane</keyword>
<keyword id="KW-1185">Reference proteome</keyword>
<keyword id="KW-0812">Transmembrane</keyword>
<keyword id="KW-1133">Transmembrane helix</keyword>
<organism>
    <name type="scientific">Actinobacillus succinogenes (strain ATCC 55618 / DSM 22257 / CCUG 43843 / 130Z)</name>
    <dbReference type="NCBI Taxonomy" id="339671"/>
    <lineage>
        <taxon>Bacteria</taxon>
        <taxon>Pseudomonadati</taxon>
        <taxon>Pseudomonadota</taxon>
        <taxon>Gammaproteobacteria</taxon>
        <taxon>Pasteurellales</taxon>
        <taxon>Pasteurellaceae</taxon>
        <taxon>Actinobacillus</taxon>
    </lineage>
</organism>
<proteinExistence type="inferred from homology"/>
<name>ZIPA_ACTSZ</name>
<feature type="chain" id="PRO_1000072469" description="Cell division protein ZipA">
    <location>
        <begin position="1"/>
        <end position="343"/>
    </location>
</feature>
<feature type="topological domain" description="Periplasmic" evidence="1">
    <location>
        <begin position="1"/>
        <end position="4"/>
    </location>
</feature>
<feature type="transmembrane region" description="Helical" evidence="1">
    <location>
        <begin position="5"/>
        <end position="25"/>
    </location>
</feature>
<feature type="topological domain" description="Cytoplasmic" evidence="1">
    <location>
        <begin position="26"/>
        <end position="343"/>
    </location>
</feature>
<feature type="region of interest" description="Disordered" evidence="2">
    <location>
        <begin position="39"/>
        <end position="98"/>
    </location>
</feature>
<feature type="compositionally biased region" description="Polar residues" evidence="2">
    <location>
        <begin position="43"/>
        <end position="62"/>
    </location>
</feature>
<feature type="compositionally biased region" description="Polar residues" evidence="2">
    <location>
        <begin position="72"/>
        <end position="95"/>
    </location>
</feature>